<keyword id="KW-0007">Acetylation</keyword>
<keyword id="KW-0015">Albinism</keyword>
<keyword id="KW-0025">Alternative splicing</keyword>
<keyword id="KW-0175">Coiled coil</keyword>
<keyword id="KW-0363">Hermansky-Pudlak syndrome</keyword>
<keyword id="KW-1267">Proteomics identification</keyword>
<keyword id="KW-1185">Reference proteome</keyword>
<accession>Q8TDH9</accession>
<accession>B4DVM2</accession>
<accession>Q0VDJ6</accession>
<accession>Q0VDJ7</accession>
<accession>Q5THS1</accession>
<accession>Q68D56</accession>
<accession>Q8N5F9</accession>
<accession>Q9NU16</accession>
<proteinExistence type="evidence at protein level"/>
<comment type="function">
    <text evidence="6 8">Component of the BLOC-1 complex, a complex that is required for normal biogenesis of lysosome-related organelles (LRO), such as platelet dense granules and melanosomes (PubMed:32565547). In concert with the AP-3 complex, the BLOC-1 complex is required to target membrane protein cargos into vesicles assembled at cell bodies for delivery into neurites and nerve terminals. The BLOC-1 complex, in association with SNARE proteins, is also proposed to be involved in neurite extension. Plays a role in intracellular vesicle trafficking.</text>
</comment>
<comment type="subunit">
    <text evidence="1 4 5 6 7">Interacts with BLOC1S4, DTNBP1/BLOC1S7 and PI4K2A (By similarity). Component of the biogenesis of lysosome-related organelles complex 1 (BLOC-1) composed of BLOC1S1, BLOC1S2, BLOC1S3, BLOC1S4, BLOC1S5, BLOC1S6, DTNBP1/BLOC1S7 and SNAPIN/BLOC1S8. Octamer composed of one copy each BLOC1S1, BLOC1S2, BLOC1S3, BLOC1S4, BLOC1S5, BLOC1S6, DTNBP1/BLOC1S7 and SNAPIN/BLOC1S8. The BLOC-1 complex associates with the AP-3 protein complex and membrane protein cargos. Interacts with BLOC1S6.</text>
</comment>
<comment type="interaction">
    <interactant intactId="EBI-465861">
        <id>Q8TDH9</id>
    </interactant>
    <interactant intactId="EBI-11096309">
        <id>Q9NYB9-2</id>
        <label>ABI2</label>
    </interactant>
    <organismsDiffer>false</organismsDiffer>
    <experiments>3</experiments>
</comment>
<comment type="interaction">
    <interactant intactId="EBI-465861">
        <id>Q8TDH9</id>
    </interactant>
    <interactant intactId="EBI-742038">
        <id>Q9P2A4</id>
        <label>ABI3</label>
    </interactant>
    <organismsDiffer>false</organismsDiffer>
    <experiments>3</experiments>
</comment>
<comment type="interaction">
    <interactant intactId="EBI-465861">
        <id>Q8TDH9</id>
    </interactant>
    <interactant intactId="EBI-465872">
        <id>Q6QNY1</id>
        <label>BLOC1S2</label>
    </interactant>
    <organismsDiffer>false</organismsDiffer>
    <experiments>4</experiments>
</comment>
<comment type="interaction">
    <interactant intactId="EBI-465861">
        <id>Q8TDH9</id>
    </interactant>
    <interactant intactId="EBI-465804">
        <id>Q96EV8</id>
        <label>DTNBP1</label>
    </interactant>
    <organismsDiffer>false</organismsDiffer>
    <experiments>5</experiments>
</comment>
<comment type="interaction">
    <interactant intactId="EBI-465861">
        <id>Q8TDH9</id>
    </interactant>
    <interactant intactId="EBI-748664">
        <id>O75506</id>
        <label>HSBP1</label>
    </interactant>
    <organismsDiffer>false</organismsDiffer>
    <experiments>3</experiments>
</comment>
<comment type="interaction">
    <interactant intactId="EBI-465861">
        <id>Q8TDH9</id>
    </interactant>
    <interactant intactId="EBI-536879">
        <id>O43482</id>
        <label>OIP5</label>
    </interactant>
    <organismsDiffer>false</organismsDiffer>
    <experiments>3</experiments>
</comment>
<comment type="interaction">
    <interactant intactId="EBI-465861">
        <id>Q8TDH9</id>
    </interactant>
    <interactant intactId="EBI-348489">
        <id>P40425</id>
        <label>PBX2</label>
    </interactant>
    <organismsDiffer>false</organismsDiffer>
    <experiments>3</experiments>
</comment>
<comment type="interaction">
    <interactant intactId="EBI-465861">
        <id>Q8TDH9</id>
    </interactant>
    <interactant intactId="EBI-1373569">
        <id>P55347</id>
        <label>PKNOX1</label>
    </interactant>
    <organismsDiffer>false</organismsDiffer>
    <experiments>3</experiments>
</comment>
<comment type="interaction">
    <interactant intactId="EBI-465861">
        <id>Q8TDH9</id>
    </interactant>
    <interactant intactId="EBI-358489">
        <id>Q96GM5</id>
        <label>SMARCD1</label>
    </interactant>
    <organismsDiffer>false</organismsDiffer>
    <experiments>3</experiments>
</comment>
<comment type="interaction">
    <interactant intactId="EBI-465861">
        <id>Q8TDH9</id>
    </interactant>
    <interactant intactId="EBI-21353855">
        <id>Q99598</id>
        <label>TSNAX</label>
    </interactant>
    <organismsDiffer>false</organismsDiffer>
    <experiments>6</experiments>
</comment>
<comment type="alternative products">
    <event type="alternative splicing"/>
    <isoform>
        <id>Q8TDH9-1</id>
        <name>1</name>
        <sequence type="displayed"/>
    </isoform>
    <isoform>
        <id>Q8TDH9-2</id>
        <name>2</name>
        <sequence type="described" ref="VSP_015088 VSP_015089"/>
    </isoform>
    <isoform>
        <id>Q8TDH9-3</id>
        <name>3</name>
        <sequence type="described" ref="VSP_045013"/>
    </isoform>
</comment>
<comment type="disease" evidence="8">
    <disease id="DI-06004">
        <name>Hermansky-Pudlak syndrome 11</name>
        <acronym>HPS11</acronym>
        <description>A form of Hermansky-Pudlak syndrome, a genetically heterogeneous autosomal recessive disorder characterized by oculocutaneous albinism, bleeding due to platelet storage pool deficiency, and lysosomal storage defects. This syndrome results from defects of diverse cytoplasmic organelles including melanosomes, platelet dense granules and lysosomes. Ceroid storage in the lungs is associated with pulmonary fibrosis, a common cause of premature death in individuals with HPS.</description>
        <dbReference type="MIM" id="619172"/>
    </disease>
    <text>The disease is caused by variants affecting the gene represented in this entry.</text>
</comment>
<comment type="similarity">
    <text evidence="10">Belongs to the BLOC1S5 family.</text>
</comment>
<comment type="sequence caution" evidence="10">
    <conflict type="erroneous initiation">
        <sequence resource="EMBL-CDS" id="AAH32438"/>
    </conflict>
    <text>Extended N-terminus.</text>
</comment>
<reference key="1">
    <citation type="journal article" date="2002" name="Hum. Mol. Genet.">
        <title>The gene for the muted (mu) mouse, a model for Hermansky-Pudlak syndrome, defines a novel protein which regulates vesicle trafficking.</title>
        <authorList>
            <person name="Zhang Q."/>
            <person name="Li W."/>
            <person name="Novak E.K."/>
            <person name="Karim A."/>
            <person name="Mishra V.S."/>
            <person name="Kingsmore S.F."/>
            <person name="Roe B.A."/>
            <person name="Suzuki T."/>
            <person name="Swank R.T."/>
        </authorList>
    </citation>
    <scope>NUCLEOTIDE SEQUENCE [MRNA] (ISOFORM 1)</scope>
</reference>
<reference key="2">
    <citation type="journal article" date="2004" name="Nat. Genet.">
        <title>Complete sequencing and characterization of 21,243 full-length human cDNAs.</title>
        <authorList>
            <person name="Ota T."/>
            <person name="Suzuki Y."/>
            <person name="Nishikawa T."/>
            <person name="Otsuki T."/>
            <person name="Sugiyama T."/>
            <person name="Irie R."/>
            <person name="Wakamatsu A."/>
            <person name="Hayashi K."/>
            <person name="Sato H."/>
            <person name="Nagai K."/>
            <person name="Kimura K."/>
            <person name="Makita H."/>
            <person name="Sekine M."/>
            <person name="Obayashi M."/>
            <person name="Nishi T."/>
            <person name="Shibahara T."/>
            <person name="Tanaka T."/>
            <person name="Ishii S."/>
            <person name="Yamamoto J."/>
            <person name="Saito K."/>
            <person name="Kawai Y."/>
            <person name="Isono Y."/>
            <person name="Nakamura Y."/>
            <person name="Nagahari K."/>
            <person name="Murakami K."/>
            <person name="Yasuda T."/>
            <person name="Iwayanagi T."/>
            <person name="Wagatsuma M."/>
            <person name="Shiratori A."/>
            <person name="Sudo H."/>
            <person name="Hosoiri T."/>
            <person name="Kaku Y."/>
            <person name="Kodaira H."/>
            <person name="Kondo H."/>
            <person name="Sugawara M."/>
            <person name="Takahashi M."/>
            <person name="Kanda K."/>
            <person name="Yokoi T."/>
            <person name="Furuya T."/>
            <person name="Kikkawa E."/>
            <person name="Omura Y."/>
            <person name="Abe K."/>
            <person name="Kamihara K."/>
            <person name="Katsuta N."/>
            <person name="Sato K."/>
            <person name="Tanikawa M."/>
            <person name="Yamazaki M."/>
            <person name="Ninomiya K."/>
            <person name="Ishibashi T."/>
            <person name="Yamashita H."/>
            <person name="Murakawa K."/>
            <person name="Fujimori K."/>
            <person name="Tanai H."/>
            <person name="Kimata M."/>
            <person name="Watanabe M."/>
            <person name="Hiraoka S."/>
            <person name="Chiba Y."/>
            <person name="Ishida S."/>
            <person name="Ono Y."/>
            <person name="Takiguchi S."/>
            <person name="Watanabe S."/>
            <person name="Yosida M."/>
            <person name="Hotuta T."/>
            <person name="Kusano J."/>
            <person name="Kanehori K."/>
            <person name="Takahashi-Fujii A."/>
            <person name="Hara H."/>
            <person name="Tanase T.-O."/>
            <person name="Nomura Y."/>
            <person name="Togiya S."/>
            <person name="Komai F."/>
            <person name="Hara R."/>
            <person name="Takeuchi K."/>
            <person name="Arita M."/>
            <person name="Imose N."/>
            <person name="Musashino K."/>
            <person name="Yuuki H."/>
            <person name="Oshima A."/>
            <person name="Sasaki N."/>
            <person name="Aotsuka S."/>
            <person name="Yoshikawa Y."/>
            <person name="Matsunawa H."/>
            <person name="Ichihara T."/>
            <person name="Shiohata N."/>
            <person name="Sano S."/>
            <person name="Moriya S."/>
            <person name="Momiyama H."/>
            <person name="Satoh N."/>
            <person name="Takami S."/>
            <person name="Terashima Y."/>
            <person name="Suzuki O."/>
            <person name="Nakagawa S."/>
            <person name="Senoh A."/>
            <person name="Mizoguchi H."/>
            <person name="Goto Y."/>
            <person name="Shimizu F."/>
            <person name="Wakebe H."/>
            <person name="Hishigaki H."/>
            <person name="Watanabe T."/>
            <person name="Sugiyama A."/>
            <person name="Takemoto M."/>
            <person name="Kawakami B."/>
            <person name="Yamazaki M."/>
            <person name="Watanabe K."/>
            <person name="Kumagai A."/>
            <person name="Itakura S."/>
            <person name="Fukuzumi Y."/>
            <person name="Fujimori Y."/>
            <person name="Komiyama M."/>
            <person name="Tashiro H."/>
            <person name="Tanigami A."/>
            <person name="Fujiwara T."/>
            <person name="Ono T."/>
            <person name="Yamada K."/>
            <person name="Fujii Y."/>
            <person name="Ozaki K."/>
            <person name="Hirao M."/>
            <person name="Ohmori Y."/>
            <person name="Kawabata A."/>
            <person name="Hikiji T."/>
            <person name="Kobatake N."/>
            <person name="Inagaki H."/>
            <person name="Ikema Y."/>
            <person name="Okamoto S."/>
            <person name="Okitani R."/>
            <person name="Kawakami T."/>
            <person name="Noguchi S."/>
            <person name="Itoh T."/>
            <person name="Shigeta K."/>
            <person name="Senba T."/>
            <person name="Matsumura K."/>
            <person name="Nakajima Y."/>
            <person name="Mizuno T."/>
            <person name="Morinaga M."/>
            <person name="Sasaki M."/>
            <person name="Togashi T."/>
            <person name="Oyama M."/>
            <person name="Hata H."/>
            <person name="Watanabe M."/>
            <person name="Komatsu T."/>
            <person name="Mizushima-Sugano J."/>
            <person name="Satoh T."/>
            <person name="Shirai Y."/>
            <person name="Takahashi Y."/>
            <person name="Nakagawa K."/>
            <person name="Okumura K."/>
            <person name="Nagase T."/>
            <person name="Nomura N."/>
            <person name="Kikuchi H."/>
            <person name="Masuho Y."/>
            <person name="Yamashita R."/>
            <person name="Nakai K."/>
            <person name="Yada T."/>
            <person name="Nakamura Y."/>
            <person name="Ohara O."/>
            <person name="Isogai T."/>
            <person name="Sugano S."/>
        </authorList>
    </citation>
    <scope>NUCLEOTIDE SEQUENCE [LARGE SCALE MRNA] (ISOFORM 1)</scope>
    <source>
        <tissue>Spleen</tissue>
    </source>
</reference>
<reference key="3">
    <citation type="journal article" date="2007" name="BMC Genomics">
        <title>The full-ORF clone resource of the German cDNA consortium.</title>
        <authorList>
            <person name="Bechtel S."/>
            <person name="Rosenfelder H."/>
            <person name="Duda A."/>
            <person name="Schmidt C.P."/>
            <person name="Ernst U."/>
            <person name="Wellenreuther R."/>
            <person name="Mehrle A."/>
            <person name="Schuster C."/>
            <person name="Bahr A."/>
            <person name="Bloecker H."/>
            <person name="Heubner D."/>
            <person name="Hoerlein A."/>
            <person name="Michel G."/>
            <person name="Wedler H."/>
            <person name="Koehrer K."/>
            <person name="Ottenwaelder B."/>
            <person name="Poustka A."/>
            <person name="Wiemann S."/>
            <person name="Schupp I."/>
        </authorList>
    </citation>
    <scope>NUCLEOTIDE SEQUENCE [LARGE SCALE MRNA] (ISOFORM 1)</scope>
    <source>
        <tissue>Retina</tissue>
    </source>
</reference>
<reference key="4">
    <citation type="journal article" date="2003" name="Nature">
        <title>The DNA sequence and analysis of human chromosome 6.</title>
        <authorList>
            <person name="Mungall A.J."/>
            <person name="Palmer S.A."/>
            <person name="Sims S.K."/>
            <person name="Edwards C.A."/>
            <person name="Ashurst J.L."/>
            <person name="Wilming L."/>
            <person name="Jones M.C."/>
            <person name="Horton R."/>
            <person name="Hunt S.E."/>
            <person name="Scott C.E."/>
            <person name="Gilbert J.G.R."/>
            <person name="Clamp M.E."/>
            <person name="Bethel G."/>
            <person name="Milne S."/>
            <person name="Ainscough R."/>
            <person name="Almeida J.P."/>
            <person name="Ambrose K.D."/>
            <person name="Andrews T.D."/>
            <person name="Ashwell R.I.S."/>
            <person name="Babbage A.K."/>
            <person name="Bagguley C.L."/>
            <person name="Bailey J."/>
            <person name="Banerjee R."/>
            <person name="Barker D.J."/>
            <person name="Barlow K.F."/>
            <person name="Bates K."/>
            <person name="Beare D.M."/>
            <person name="Beasley H."/>
            <person name="Beasley O."/>
            <person name="Bird C.P."/>
            <person name="Blakey S.E."/>
            <person name="Bray-Allen S."/>
            <person name="Brook J."/>
            <person name="Brown A.J."/>
            <person name="Brown J.Y."/>
            <person name="Burford D.C."/>
            <person name="Burrill W."/>
            <person name="Burton J."/>
            <person name="Carder C."/>
            <person name="Carter N.P."/>
            <person name="Chapman J.C."/>
            <person name="Clark S.Y."/>
            <person name="Clark G."/>
            <person name="Clee C.M."/>
            <person name="Clegg S."/>
            <person name="Cobley V."/>
            <person name="Collier R.E."/>
            <person name="Collins J.E."/>
            <person name="Colman L.K."/>
            <person name="Corby N.R."/>
            <person name="Coville G.J."/>
            <person name="Culley K.M."/>
            <person name="Dhami P."/>
            <person name="Davies J."/>
            <person name="Dunn M."/>
            <person name="Earthrowl M.E."/>
            <person name="Ellington A.E."/>
            <person name="Evans K.A."/>
            <person name="Faulkner L."/>
            <person name="Francis M.D."/>
            <person name="Frankish A."/>
            <person name="Frankland J."/>
            <person name="French L."/>
            <person name="Garner P."/>
            <person name="Garnett J."/>
            <person name="Ghori M.J."/>
            <person name="Gilby L.M."/>
            <person name="Gillson C.J."/>
            <person name="Glithero R.J."/>
            <person name="Grafham D.V."/>
            <person name="Grant M."/>
            <person name="Gribble S."/>
            <person name="Griffiths C."/>
            <person name="Griffiths M.N.D."/>
            <person name="Hall R."/>
            <person name="Halls K.S."/>
            <person name="Hammond S."/>
            <person name="Harley J.L."/>
            <person name="Hart E.A."/>
            <person name="Heath P.D."/>
            <person name="Heathcott R."/>
            <person name="Holmes S.J."/>
            <person name="Howden P.J."/>
            <person name="Howe K.L."/>
            <person name="Howell G.R."/>
            <person name="Huckle E."/>
            <person name="Humphray S.J."/>
            <person name="Humphries M.D."/>
            <person name="Hunt A.R."/>
            <person name="Johnson C.M."/>
            <person name="Joy A.A."/>
            <person name="Kay M."/>
            <person name="Keenan S.J."/>
            <person name="Kimberley A.M."/>
            <person name="King A."/>
            <person name="Laird G.K."/>
            <person name="Langford C."/>
            <person name="Lawlor S."/>
            <person name="Leongamornlert D.A."/>
            <person name="Leversha M."/>
            <person name="Lloyd C.R."/>
            <person name="Lloyd D.M."/>
            <person name="Loveland J.E."/>
            <person name="Lovell J."/>
            <person name="Martin S."/>
            <person name="Mashreghi-Mohammadi M."/>
            <person name="Maslen G.L."/>
            <person name="Matthews L."/>
            <person name="McCann O.T."/>
            <person name="McLaren S.J."/>
            <person name="McLay K."/>
            <person name="McMurray A."/>
            <person name="Moore M.J.F."/>
            <person name="Mullikin J.C."/>
            <person name="Niblett D."/>
            <person name="Nickerson T."/>
            <person name="Novik K.L."/>
            <person name="Oliver K."/>
            <person name="Overton-Larty E.K."/>
            <person name="Parker A."/>
            <person name="Patel R."/>
            <person name="Pearce A.V."/>
            <person name="Peck A.I."/>
            <person name="Phillimore B.J.C.T."/>
            <person name="Phillips S."/>
            <person name="Plumb R.W."/>
            <person name="Porter K.M."/>
            <person name="Ramsey Y."/>
            <person name="Ranby S.A."/>
            <person name="Rice C.M."/>
            <person name="Ross M.T."/>
            <person name="Searle S.M."/>
            <person name="Sehra H.K."/>
            <person name="Sheridan E."/>
            <person name="Skuce C.D."/>
            <person name="Smith S."/>
            <person name="Smith M."/>
            <person name="Spraggon L."/>
            <person name="Squares S.L."/>
            <person name="Steward C.A."/>
            <person name="Sycamore N."/>
            <person name="Tamlyn-Hall G."/>
            <person name="Tester J."/>
            <person name="Theaker A.J."/>
            <person name="Thomas D.W."/>
            <person name="Thorpe A."/>
            <person name="Tracey A."/>
            <person name="Tromans A."/>
            <person name="Tubby B."/>
            <person name="Wall M."/>
            <person name="Wallis J.M."/>
            <person name="West A.P."/>
            <person name="White S.S."/>
            <person name="Whitehead S.L."/>
            <person name="Whittaker H."/>
            <person name="Wild A."/>
            <person name="Willey D.J."/>
            <person name="Wilmer T.E."/>
            <person name="Wood J.M."/>
            <person name="Wray P.W."/>
            <person name="Wyatt J.C."/>
            <person name="Young L."/>
            <person name="Younger R.M."/>
            <person name="Bentley D.R."/>
            <person name="Coulson A."/>
            <person name="Durbin R.M."/>
            <person name="Hubbard T."/>
            <person name="Sulston J.E."/>
            <person name="Dunham I."/>
            <person name="Rogers J."/>
            <person name="Beck S."/>
        </authorList>
    </citation>
    <scope>NUCLEOTIDE SEQUENCE [LARGE SCALE GENOMIC DNA]</scope>
</reference>
<reference key="5">
    <citation type="journal article" date="2004" name="Genome Res.">
        <title>The status, quality, and expansion of the NIH full-length cDNA project: the Mammalian Gene Collection (MGC).</title>
        <authorList>
            <consortium name="The MGC Project Team"/>
        </authorList>
    </citation>
    <scope>NUCLEOTIDE SEQUENCE [LARGE SCALE MRNA] (ISOFORMS 1 AND 3)</scope>
    <source>
        <tissue>Lymph</tissue>
    </source>
</reference>
<reference key="6">
    <citation type="journal article" date="2002" name="Traffic">
        <title>Pallidin is a component of a multi-protein complex involved in the biogenesis of lysosome-related organelles.</title>
        <authorList>
            <person name="Moriyama K."/>
            <person name="Bonifacino J.S."/>
        </authorList>
    </citation>
    <scope>INTERACTION WITH BLOC1S6</scope>
</reference>
<reference key="7">
    <citation type="journal article" date="2002" name="J. Biol. Chem.">
        <title>BLOC-1, a novel complex containing the pallidin and muted proteins involved in the biogenesis of melanosomes and platelet-dense granules.</title>
        <authorList>
            <person name="Falcon-Perez J.M."/>
            <person name="Starcevic M."/>
            <person name="Gautam R."/>
            <person name="Dell'Angelica E.C."/>
        </authorList>
    </citation>
    <scope>INTERACTION WITH BLOC1S6</scope>
</reference>
<reference key="8">
    <citation type="journal article" date="2007" name="Mol. Biol. Cell">
        <title>BLOC-1 is required for cargo-specific sorting from vacuolar early endosomes toward lysosome-related organelles.</title>
        <authorList>
            <person name="Setty S.R."/>
            <person name="Tenza D."/>
            <person name="Truschel S.T."/>
            <person name="Chou E."/>
            <person name="Sviderskaya E.V."/>
            <person name="Theos A.C."/>
            <person name="Lamoreux M.L."/>
            <person name="Di Pietro S.M."/>
            <person name="Starcevic M."/>
            <person name="Bennett D.C."/>
            <person name="Dell'Angelica E.C."/>
            <person name="Raposo G."/>
            <person name="Marks M.S."/>
        </authorList>
    </citation>
    <scope>IDENTIFICATION IN THE BLOC-1 COMPLEX</scope>
    <scope>FUNCTION</scope>
</reference>
<reference key="9">
    <citation type="journal article" date="2009" name="Anal. Chem.">
        <title>Lys-N and trypsin cover complementary parts of the phosphoproteome in a refined SCX-based approach.</title>
        <authorList>
            <person name="Gauci S."/>
            <person name="Helbig A.O."/>
            <person name="Slijper M."/>
            <person name="Krijgsveld J."/>
            <person name="Heck A.J."/>
            <person name="Mohammed S."/>
        </authorList>
    </citation>
    <scope>ACETYLATION [LARGE SCALE ANALYSIS] AT SER-2</scope>
    <scope>CLEAVAGE OF INITIATOR METHIONINE [LARGE SCALE ANALYSIS]</scope>
    <scope>IDENTIFICATION BY MASS SPECTROMETRY [LARGE SCALE ANALYSIS]</scope>
</reference>
<reference key="10">
    <citation type="journal article" date="2011" name="BMC Syst. Biol.">
        <title>Initial characterization of the human central proteome.</title>
        <authorList>
            <person name="Burkard T.R."/>
            <person name="Planyavsky M."/>
            <person name="Kaupe I."/>
            <person name="Breitwieser F.P."/>
            <person name="Buerckstuemmer T."/>
            <person name="Bennett K.L."/>
            <person name="Superti-Furga G."/>
            <person name="Colinge J."/>
        </authorList>
    </citation>
    <scope>IDENTIFICATION BY MASS SPECTROMETRY [LARGE SCALE ANALYSIS]</scope>
</reference>
<reference key="11">
    <citation type="journal article" date="2012" name="J. Biol. Chem.">
        <title>Assembly and architecture of biogenesis of lysosome-related organelles complex-1 (BLOC-1).</title>
        <authorList>
            <person name="Lee H.H."/>
            <person name="Nemecek D."/>
            <person name="Schindler C."/>
            <person name="Smith W.J."/>
            <person name="Ghirlando R."/>
            <person name="Steven A.C."/>
            <person name="Bonifacino J.S."/>
            <person name="Hurley J.H."/>
        </authorList>
    </citation>
    <scope>IDENTIFICATION IN THE BLOC-1 COMPLEX</scope>
    <scope>COMPOSITION OF THE BLOC-1 COMPLEX</scope>
</reference>
<reference key="12">
    <citation type="journal article" date="2020" name="Genet. Med.">
        <title>BLOC1S5 pathogenic variants cause a new type of Hermansky-Pudlak syndrome.</title>
        <authorList>
            <person name="Pennamen P."/>
            <person name="Le L."/>
            <person name="Tingaud-Sequeira A."/>
            <person name="Fiore M."/>
            <person name="Bauters A."/>
            <person name="Van Duong Beatrice N."/>
            <person name="Coste V."/>
            <person name="Bordet J.C."/>
            <person name="Plaisant C."/>
            <person name="Diallo M."/>
            <person name="Michaud V."/>
            <person name="Trimouille A."/>
            <person name="Lacombe D."/>
            <person name="Lasseaux E."/>
            <person name="Delevoye C."/>
            <person name="Picard F.M."/>
            <person name="Delobel B."/>
            <person name="Marks M.S."/>
            <person name="Arveiler B."/>
        </authorList>
    </citation>
    <scope>INVOLVED IN HPS11</scope>
    <scope>FUNCTION</scope>
</reference>
<name>BL1S5_HUMAN</name>
<sequence length="187" mass="21609">MSGGGTETPVGCEAAPGGGSKKRDSLGTAGSAHLIIKDLGEIHSRLLDHRPVIQGETRYFVKEFEEKRGLREMRVLENLKNMIHETNEHTLPKCRDTMRDSLSQVLQRLQAANDSVCRLQQREQERKKIHSDHLVASEKQHMLQWDNFMKEQPNKRAEVDEEHRKAMERLKEQYAEMEKDLAKFSTF</sequence>
<feature type="initiator methionine" description="Removed" evidence="12">
    <location>
        <position position="1"/>
    </location>
</feature>
<feature type="chain" id="PRO_0000096651" description="Biogenesis of lysosome-related organelles complex 1 subunit 5">
    <location>
        <begin position="2"/>
        <end position="187"/>
    </location>
</feature>
<feature type="region of interest" description="Disordered" evidence="3">
    <location>
        <begin position="1"/>
        <end position="26"/>
    </location>
</feature>
<feature type="coiled-coil region" evidence="2">
    <location>
        <begin position="154"/>
        <end position="186"/>
    </location>
</feature>
<feature type="modified residue" description="N-acetylserine" evidence="12">
    <location>
        <position position="2"/>
    </location>
</feature>
<feature type="splice variant" id="VSP_045013" description="In isoform 3." evidence="9">
    <original>MSGGGTETPVGCEAAPGGGSKKRDSLGTAGSAHLIIKDLGEIHSRLLDHRPVIQGETRYFVKEFE</original>
    <variation>M</variation>
    <location>
        <begin position="1"/>
        <end position="65"/>
    </location>
</feature>
<feature type="splice variant" id="VSP_015088" description="In isoform 2." evidence="10">
    <original>LQ</original>
    <variation>YS</variation>
    <location>
        <begin position="109"/>
        <end position="110"/>
    </location>
</feature>
<feature type="splice variant" id="VSP_015089" description="In isoform 2." evidence="10">
    <location>
        <begin position="111"/>
        <end position="187"/>
    </location>
</feature>
<organism>
    <name type="scientific">Homo sapiens</name>
    <name type="common">Human</name>
    <dbReference type="NCBI Taxonomy" id="9606"/>
    <lineage>
        <taxon>Eukaryota</taxon>
        <taxon>Metazoa</taxon>
        <taxon>Chordata</taxon>
        <taxon>Craniata</taxon>
        <taxon>Vertebrata</taxon>
        <taxon>Euteleostomi</taxon>
        <taxon>Mammalia</taxon>
        <taxon>Eutheria</taxon>
        <taxon>Euarchontoglires</taxon>
        <taxon>Primates</taxon>
        <taxon>Haplorrhini</taxon>
        <taxon>Catarrhini</taxon>
        <taxon>Hominidae</taxon>
        <taxon>Homo</taxon>
    </lineage>
</organism>
<gene>
    <name evidence="11" type="primary">BLOC1S5</name>
    <name type="synonym">MUTED</name>
</gene>
<evidence type="ECO:0000250" key="1"/>
<evidence type="ECO:0000255" key="2"/>
<evidence type="ECO:0000256" key="3">
    <source>
        <dbReference type="SAM" id="MobiDB-lite"/>
    </source>
</evidence>
<evidence type="ECO:0000269" key="4">
    <source>
    </source>
</evidence>
<evidence type="ECO:0000269" key="5">
    <source>
    </source>
</evidence>
<evidence type="ECO:0000269" key="6">
    <source>
    </source>
</evidence>
<evidence type="ECO:0000269" key="7">
    <source>
    </source>
</evidence>
<evidence type="ECO:0000269" key="8">
    <source>
    </source>
</evidence>
<evidence type="ECO:0000303" key="9">
    <source>
    </source>
</evidence>
<evidence type="ECO:0000305" key="10"/>
<evidence type="ECO:0000312" key="11">
    <source>
        <dbReference type="HGNC" id="HGNC:18561"/>
    </source>
</evidence>
<evidence type="ECO:0007744" key="12">
    <source>
    </source>
</evidence>
<protein>
    <recommendedName>
        <fullName evidence="10">Biogenesis of lysosome-related organelles complex 1 subunit 5</fullName>
        <shortName>BLOC-1 subunit 5</shortName>
    </recommendedName>
    <alternativeName>
        <fullName>Protein Muted homolog</fullName>
    </alternativeName>
</protein>
<dbReference type="EMBL" id="AF426434">
    <property type="protein sequence ID" value="AAL99385.1"/>
    <property type="molecule type" value="mRNA"/>
</dbReference>
<dbReference type="EMBL" id="AK301142">
    <property type="protein sequence ID" value="BAG62734.1"/>
    <property type="molecule type" value="mRNA"/>
</dbReference>
<dbReference type="EMBL" id="CR749569">
    <property type="protein sequence ID" value="CAH18364.1"/>
    <property type="molecule type" value="mRNA"/>
</dbReference>
<dbReference type="EMBL" id="AL023694">
    <property type="status" value="NOT_ANNOTATED_CDS"/>
    <property type="molecule type" value="Genomic_DNA"/>
</dbReference>
<dbReference type="EMBL" id="AL096800">
    <property type="status" value="NOT_ANNOTATED_CDS"/>
    <property type="molecule type" value="Genomic_DNA"/>
</dbReference>
<dbReference type="EMBL" id="BC032438">
    <property type="protein sequence ID" value="AAH32438.1"/>
    <property type="status" value="ALT_INIT"/>
    <property type="molecule type" value="mRNA"/>
</dbReference>
<dbReference type="EMBL" id="BC119644">
    <property type="protein sequence ID" value="AAI19645.1"/>
    <property type="molecule type" value="mRNA"/>
</dbReference>
<dbReference type="EMBL" id="BC119645">
    <property type="protein sequence ID" value="AAI19646.1"/>
    <property type="molecule type" value="mRNA"/>
</dbReference>
<dbReference type="CCDS" id="CCDS4506.1">
    <molecule id="Q8TDH9-1"/>
</dbReference>
<dbReference type="RefSeq" id="NP_001186251.1">
    <molecule id="Q8TDH9-3"/>
    <property type="nucleotide sequence ID" value="NM_001199322.1"/>
</dbReference>
<dbReference type="RefSeq" id="NP_958437.1">
    <molecule id="Q8TDH9-1"/>
    <property type="nucleotide sequence ID" value="NM_201280.3"/>
</dbReference>
<dbReference type="SMR" id="Q8TDH9"/>
<dbReference type="BioGRID" id="121986">
    <property type="interactions" value="45"/>
</dbReference>
<dbReference type="ComplexPortal" id="CPX-1910">
    <property type="entry name" value="BLOC-1 complex"/>
</dbReference>
<dbReference type="CORUM" id="Q8TDH9"/>
<dbReference type="FunCoup" id="Q8TDH9">
    <property type="interactions" value="879"/>
</dbReference>
<dbReference type="IntAct" id="Q8TDH9">
    <property type="interactions" value="36"/>
</dbReference>
<dbReference type="STRING" id="9606.ENSP00000380598"/>
<dbReference type="GlyGen" id="Q8TDH9">
    <property type="glycosylation" value="1 site, 1 O-linked glycan (1 site)"/>
</dbReference>
<dbReference type="iPTMnet" id="Q8TDH9"/>
<dbReference type="PhosphoSitePlus" id="Q8TDH9"/>
<dbReference type="BioMuta" id="BLOC1S5"/>
<dbReference type="DMDM" id="34582369"/>
<dbReference type="jPOST" id="Q8TDH9"/>
<dbReference type="MassIVE" id="Q8TDH9"/>
<dbReference type="PaxDb" id="9606-ENSP00000380598"/>
<dbReference type="PeptideAtlas" id="Q8TDH9"/>
<dbReference type="ProteomicsDB" id="58830"/>
<dbReference type="ProteomicsDB" id="74287">
    <molecule id="Q8TDH9-1"/>
</dbReference>
<dbReference type="ProteomicsDB" id="74288">
    <molecule id="Q8TDH9-2"/>
</dbReference>
<dbReference type="Pumba" id="Q8TDH9"/>
<dbReference type="Antibodypedia" id="34994">
    <property type="antibodies" value="113 antibodies from 19 providers"/>
</dbReference>
<dbReference type="DNASU" id="63915"/>
<dbReference type="Ensembl" id="ENST00000397457.7">
    <molecule id="Q8TDH9-1"/>
    <property type="protein sequence ID" value="ENSP00000380598.2"/>
    <property type="gene ID" value="ENSG00000188428.20"/>
</dbReference>
<dbReference type="GeneID" id="63915"/>
<dbReference type="KEGG" id="hsa:63915"/>
<dbReference type="MANE-Select" id="ENST00000397457.7">
    <property type="protein sequence ID" value="ENSP00000380598.2"/>
    <property type="RefSeq nucleotide sequence ID" value="NM_201280.3"/>
    <property type="RefSeq protein sequence ID" value="NP_958437.1"/>
</dbReference>
<dbReference type="UCSC" id="uc003mxy.3">
    <molecule id="Q8TDH9-1"/>
    <property type="organism name" value="human"/>
</dbReference>
<dbReference type="AGR" id="HGNC:18561"/>
<dbReference type="CTD" id="63915"/>
<dbReference type="DisGeNET" id="63915"/>
<dbReference type="GeneCards" id="BLOC1S5"/>
<dbReference type="GeneReviews" id="BLOC1S5"/>
<dbReference type="HGNC" id="HGNC:18561">
    <property type="gene designation" value="BLOC1S5"/>
</dbReference>
<dbReference type="HPA" id="ENSG00000188428">
    <property type="expression patterns" value="Low tissue specificity"/>
</dbReference>
<dbReference type="MalaCards" id="BLOC1S5"/>
<dbReference type="MIM" id="607289">
    <property type="type" value="gene"/>
</dbReference>
<dbReference type="MIM" id="619172">
    <property type="type" value="phenotype"/>
</dbReference>
<dbReference type="neXtProt" id="NX_Q8TDH9"/>
<dbReference type="OpenTargets" id="ENSG00000188428"/>
<dbReference type="Orphanet" id="231531">
    <property type="disease" value="Hermansky-Pudlak syndrome due to BLOC-1 deficiency"/>
</dbReference>
<dbReference type="PharmGKB" id="PA134921692"/>
<dbReference type="VEuPathDB" id="HostDB:ENSG00000188428"/>
<dbReference type="eggNOG" id="ENOG502S2QH">
    <property type="taxonomic scope" value="Eukaryota"/>
</dbReference>
<dbReference type="GeneTree" id="ENSGT00390000016974"/>
<dbReference type="InParanoid" id="Q8TDH9"/>
<dbReference type="OMA" id="MHGNLNE"/>
<dbReference type="OrthoDB" id="9476216at2759"/>
<dbReference type="PAN-GO" id="Q8TDH9">
    <property type="GO annotations" value="1 GO annotation based on evolutionary models"/>
</dbReference>
<dbReference type="PhylomeDB" id="Q8TDH9"/>
<dbReference type="TreeFam" id="TF332943"/>
<dbReference type="PathwayCommons" id="Q8TDH9"/>
<dbReference type="SignaLink" id="Q8TDH9"/>
<dbReference type="SIGNOR" id="Q8TDH9"/>
<dbReference type="BioGRID-ORCS" id="63915">
    <property type="hits" value="8 hits in 1157 CRISPR screens"/>
</dbReference>
<dbReference type="GeneWiki" id="MUTED"/>
<dbReference type="GenomeRNAi" id="63915"/>
<dbReference type="Pharos" id="Q8TDH9">
    <property type="development level" value="Tbio"/>
</dbReference>
<dbReference type="PRO" id="PR:Q8TDH9"/>
<dbReference type="Proteomes" id="UP000005640">
    <property type="component" value="Chromosome 6"/>
</dbReference>
<dbReference type="RNAct" id="Q8TDH9">
    <property type="molecule type" value="protein"/>
</dbReference>
<dbReference type="Bgee" id="ENSG00000188428">
    <property type="expression patterns" value="Expressed in pancreatic ductal cell and 198 other cell types or tissues"/>
</dbReference>
<dbReference type="ExpressionAtlas" id="Q8TDH9">
    <property type="expression patterns" value="baseline and differential"/>
</dbReference>
<dbReference type="GO" id="GO:1904115">
    <property type="term" value="C:axon cytoplasm"/>
    <property type="evidence" value="ECO:0007669"/>
    <property type="project" value="GOC"/>
</dbReference>
<dbReference type="GO" id="GO:0031083">
    <property type="term" value="C:BLOC-1 complex"/>
    <property type="evidence" value="ECO:0000314"/>
    <property type="project" value="UniProtKB"/>
</dbReference>
<dbReference type="GO" id="GO:1990742">
    <property type="term" value="C:microvesicle"/>
    <property type="evidence" value="ECO:0007669"/>
    <property type="project" value="Ensembl"/>
</dbReference>
<dbReference type="GO" id="GO:0030133">
    <property type="term" value="C:transport vesicle"/>
    <property type="evidence" value="ECO:0000314"/>
    <property type="project" value="UniProtKB"/>
</dbReference>
<dbReference type="GO" id="GO:0008089">
    <property type="term" value="P:anterograde axonal transport"/>
    <property type="evidence" value="ECO:0000250"/>
    <property type="project" value="UniProtKB"/>
</dbReference>
<dbReference type="GO" id="GO:0048490">
    <property type="term" value="P:anterograde synaptic vesicle transport"/>
    <property type="evidence" value="ECO:0000250"/>
    <property type="project" value="UniProtKB"/>
</dbReference>
<dbReference type="GO" id="GO:0035646">
    <property type="term" value="P:endosome to melanosome transport"/>
    <property type="evidence" value="ECO:0000314"/>
    <property type="project" value="UniProtKB"/>
</dbReference>
<dbReference type="GO" id="GO:0032438">
    <property type="term" value="P:melanosome organization"/>
    <property type="evidence" value="ECO:0000303"/>
    <property type="project" value="UniProtKB"/>
</dbReference>
<dbReference type="GO" id="GO:0032402">
    <property type="term" value="P:melanosome transport"/>
    <property type="evidence" value="ECO:0000314"/>
    <property type="project" value="UniProtKB"/>
</dbReference>
<dbReference type="GO" id="GO:0031175">
    <property type="term" value="P:neuron projection development"/>
    <property type="evidence" value="ECO:0000250"/>
    <property type="project" value="UniProtKB"/>
</dbReference>
<dbReference type="GO" id="GO:0032474">
    <property type="term" value="P:otolith morphogenesis"/>
    <property type="evidence" value="ECO:0007669"/>
    <property type="project" value="Ensembl"/>
</dbReference>
<dbReference type="GO" id="GO:0050942">
    <property type="term" value="P:positive regulation of pigment cell differentiation"/>
    <property type="evidence" value="ECO:0000314"/>
    <property type="project" value="UniProtKB"/>
</dbReference>
<dbReference type="GO" id="GO:0016192">
    <property type="term" value="P:vesicle-mediated transport"/>
    <property type="evidence" value="ECO:0007669"/>
    <property type="project" value="Ensembl"/>
</dbReference>
<dbReference type="InterPro" id="IPR017243">
    <property type="entry name" value="Bloc1s5"/>
</dbReference>
<dbReference type="PANTHER" id="PTHR31784">
    <property type="entry name" value="BIOGENESIS OF LYSOSOME-RELATED ORGANELLES COMPLEX 1 SUBUNIT 5"/>
    <property type="match status" value="1"/>
</dbReference>
<dbReference type="PANTHER" id="PTHR31784:SF2">
    <property type="entry name" value="BIOGENESIS OF LYSOSOME-RELATED ORGANELLES COMPLEX 1 SUBUNIT 5"/>
    <property type="match status" value="1"/>
</dbReference>
<dbReference type="Pfam" id="PF14942">
    <property type="entry name" value="Muted"/>
    <property type="match status" value="1"/>
</dbReference>
<dbReference type="PIRSF" id="PIRSF037610">
    <property type="entry name" value="BLOC-1_complex_muted_subunit"/>
    <property type="match status" value="1"/>
</dbReference>